<proteinExistence type="inferred from homology"/>
<comment type="function">
    <text evidence="1">Catalyzes the reversible cyclization of carbamoyl aspartate to dihydroorotate.</text>
</comment>
<comment type="catalytic activity">
    <reaction evidence="1">
        <text>(S)-dihydroorotate + H2O = N-carbamoyl-L-aspartate + H(+)</text>
        <dbReference type="Rhea" id="RHEA:24296"/>
        <dbReference type="ChEBI" id="CHEBI:15377"/>
        <dbReference type="ChEBI" id="CHEBI:15378"/>
        <dbReference type="ChEBI" id="CHEBI:30864"/>
        <dbReference type="ChEBI" id="CHEBI:32814"/>
        <dbReference type="EC" id="3.5.2.3"/>
    </reaction>
</comment>
<comment type="cofactor">
    <cofactor evidence="1">
        <name>Zn(2+)</name>
        <dbReference type="ChEBI" id="CHEBI:29105"/>
    </cofactor>
    <text evidence="1">Binds 2 Zn(2+) ions per subunit.</text>
</comment>
<comment type="pathway">
    <text evidence="1">Pyrimidine metabolism; UMP biosynthesis via de novo pathway; (S)-dihydroorotate from bicarbonate: step 3/3.</text>
</comment>
<comment type="subunit">
    <text evidence="1">Homodimer.</text>
</comment>
<comment type="similarity">
    <text evidence="1">Belongs to the metallo-dependent hydrolases superfamily. DHOase family. Class II DHOase subfamily.</text>
</comment>
<evidence type="ECO:0000255" key="1">
    <source>
        <dbReference type="HAMAP-Rule" id="MF_00219"/>
    </source>
</evidence>
<protein>
    <recommendedName>
        <fullName evidence="1">Dihydroorotase</fullName>
        <shortName evidence="1">DHOase</shortName>
        <ecNumber evidence="1">3.5.2.3</ecNumber>
    </recommendedName>
</protein>
<name>PYRC_SHIB3</name>
<accession>B2TTK9</accession>
<dbReference type="EC" id="3.5.2.3" evidence="1"/>
<dbReference type="EMBL" id="CP001063">
    <property type="protein sequence ID" value="ACD07191.1"/>
    <property type="molecule type" value="Genomic_DNA"/>
</dbReference>
<dbReference type="RefSeq" id="WP_000126552.1">
    <property type="nucleotide sequence ID" value="NC_010658.1"/>
</dbReference>
<dbReference type="SMR" id="B2TTK9"/>
<dbReference type="STRING" id="344609.SbBS512_E2265"/>
<dbReference type="MEROPS" id="M38.A02"/>
<dbReference type="KEGG" id="sbc:SbBS512_E2265"/>
<dbReference type="HOGENOM" id="CLU_041558_1_0_6"/>
<dbReference type="UniPathway" id="UPA00070">
    <property type="reaction ID" value="UER00117"/>
</dbReference>
<dbReference type="Proteomes" id="UP000001030">
    <property type="component" value="Chromosome"/>
</dbReference>
<dbReference type="GO" id="GO:0005829">
    <property type="term" value="C:cytosol"/>
    <property type="evidence" value="ECO:0007669"/>
    <property type="project" value="TreeGrafter"/>
</dbReference>
<dbReference type="GO" id="GO:0004151">
    <property type="term" value="F:dihydroorotase activity"/>
    <property type="evidence" value="ECO:0007669"/>
    <property type="project" value="UniProtKB-UniRule"/>
</dbReference>
<dbReference type="GO" id="GO:0008270">
    <property type="term" value="F:zinc ion binding"/>
    <property type="evidence" value="ECO:0007669"/>
    <property type="project" value="UniProtKB-UniRule"/>
</dbReference>
<dbReference type="GO" id="GO:0006207">
    <property type="term" value="P:'de novo' pyrimidine nucleobase biosynthetic process"/>
    <property type="evidence" value="ECO:0007669"/>
    <property type="project" value="TreeGrafter"/>
</dbReference>
<dbReference type="GO" id="GO:0044205">
    <property type="term" value="P:'de novo' UMP biosynthetic process"/>
    <property type="evidence" value="ECO:0007669"/>
    <property type="project" value="UniProtKB-UniRule"/>
</dbReference>
<dbReference type="CDD" id="cd01294">
    <property type="entry name" value="DHOase"/>
    <property type="match status" value="1"/>
</dbReference>
<dbReference type="FunFam" id="3.20.20.140:FF:000006">
    <property type="entry name" value="Dihydroorotase"/>
    <property type="match status" value="1"/>
</dbReference>
<dbReference type="Gene3D" id="3.20.20.140">
    <property type="entry name" value="Metal-dependent hydrolases"/>
    <property type="match status" value="1"/>
</dbReference>
<dbReference type="HAMAP" id="MF_00219">
    <property type="entry name" value="PyrC_classII"/>
    <property type="match status" value="1"/>
</dbReference>
<dbReference type="InterPro" id="IPR006680">
    <property type="entry name" value="Amidohydro-rel"/>
</dbReference>
<dbReference type="InterPro" id="IPR004721">
    <property type="entry name" value="DHOdimr"/>
</dbReference>
<dbReference type="InterPro" id="IPR002195">
    <property type="entry name" value="Dihydroorotase_CS"/>
</dbReference>
<dbReference type="InterPro" id="IPR032466">
    <property type="entry name" value="Metal_Hydrolase"/>
</dbReference>
<dbReference type="NCBIfam" id="TIGR00856">
    <property type="entry name" value="pyrC_dimer"/>
    <property type="match status" value="1"/>
</dbReference>
<dbReference type="PANTHER" id="PTHR43137">
    <property type="entry name" value="DIHYDROOROTASE"/>
    <property type="match status" value="1"/>
</dbReference>
<dbReference type="PANTHER" id="PTHR43137:SF1">
    <property type="entry name" value="DIHYDROOROTASE"/>
    <property type="match status" value="1"/>
</dbReference>
<dbReference type="Pfam" id="PF01979">
    <property type="entry name" value="Amidohydro_1"/>
    <property type="match status" value="1"/>
</dbReference>
<dbReference type="PIRSF" id="PIRSF001237">
    <property type="entry name" value="DHOdimr"/>
    <property type="match status" value="1"/>
</dbReference>
<dbReference type="SUPFAM" id="SSF51556">
    <property type="entry name" value="Metallo-dependent hydrolases"/>
    <property type="match status" value="1"/>
</dbReference>
<dbReference type="PROSITE" id="PS00482">
    <property type="entry name" value="DIHYDROOROTASE_1"/>
    <property type="match status" value="1"/>
</dbReference>
<dbReference type="PROSITE" id="PS00483">
    <property type="entry name" value="DIHYDROOROTASE_2"/>
    <property type="match status" value="1"/>
</dbReference>
<organism>
    <name type="scientific">Shigella boydii serotype 18 (strain CDC 3083-94 / BS512)</name>
    <dbReference type="NCBI Taxonomy" id="344609"/>
    <lineage>
        <taxon>Bacteria</taxon>
        <taxon>Pseudomonadati</taxon>
        <taxon>Pseudomonadota</taxon>
        <taxon>Gammaproteobacteria</taxon>
        <taxon>Enterobacterales</taxon>
        <taxon>Enterobacteriaceae</taxon>
        <taxon>Shigella</taxon>
    </lineage>
</organism>
<feature type="chain" id="PRO_1000100064" description="Dihydroorotase">
    <location>
        <begin position="1"/>
        <end position="348"/>
    </location>
</feature>
<feature type="active site" evidence="1">
    <location>
        <position position="251"/>
    </location>
</feature>
<feature type="binding site" evidence="1">
    <location>
        <position position="17"/>
    </location>
    <ligand>
        <name>Zn(2+)</name>
        <dbReference type="ChEBI" id="CHEBI:29105"/>
        <label>1</label>
    </ligand>
</feature>
<feature type="binding site" evidence="1">
    <location>
        <begin position="19"/>
        <end position="21"/>
    </location>
    <ligand>
        <name>substrate</name>
    </ligand>
</feature>
<feature type="binding site" evidence="1">
    <location>
        <position position="19"/>
    </location>
    <ligand>
        <name>Zn(2+)</name>
        <dbReference type="ChEBI" id="CHEBI:29105"/>
        <label>1</label>
    </ligand>
</feature>
<feature type="binding site" evidence="1">
    <location>
        <position position="45"/>
    </location>
    <ligand>
        <name>substrate</name>
    </ligand>
</feature>
<feature type="binding site" description="via carbamate group" evidence="1">
    <location>
        <position position="103"/>
    </location>
    <ligand>
        <name>Zn(2+)</name>
        <dbReference type="ChEBI" id="CHEBI:29105"/>
        <label>1</label>
    </ligand>
</feature>
<feature type="binding site" description="via carbamate group" evidence="1">
    <location>
        <position position="103"/>
    </location>
    <ligand>
        <name>Zn(2+)</name>
        <dbReference type="ChEBI" id="CHEBI:29105"/>
        <label>2</label>
    </ligand>
</feature>
<feature type="binding site" evidence="1">
    <location>
        <position position="140"/>
    </location>
    <ligand>
        <name>substrate</name>
    </ligand>
</feature>
<feature type="binding site" evidence="1">
    <location>
        <position position="140"/>
    </location>
    <ligand>
        <name>Zn(2+)</name>
        <dbReference type="ChEBI" id="CHEBI:29105"/>
        <label>2</label>
    </ligand>
</feature>
<feature type="binding site" evidence="1">
    <location>
        <position position="178"/>
    </location>
    <ligand>
        <name>Zn(2+)</name>
        <dbReference type="ChEBI" id="CHEBI:29105"/>
        <label>2</label>
    </ligand>
</feature>
<feature type="binding site" evidence="1">
    <location>
        <position position="223"/>
    </location>
    <ligand>
        <name>substrate</name>
    </ligand>
</feature>
<feature type="binding site" evidence="1">
    <location>
        <position position="251"/>
    </location>
    <ligand>
        <name>Zn(2+)</name>
        <dbReference type="ChEBI" id="CHEBI:29105"/>
        <label>1</label>
    </ligand>
</feature>
<feature type="binding site" evidence="1">
    <location>
        <position position="255"/>
    </location>
    <ligand>
        <name>substrate</name>
    </ligand>
</feature>
<feature type="binding site" evidence="1">
    <location>
        <position position="267"/>
    </location>
    <ligand>
        <name>substrate</name>
    </ligand>
</feature>
<feature type="modified residue" description="N6-carboxylysine" evidence="1">
    <location>
        <position position="103"/>
    </location>
</feature>
<reference key="1">
    <citation type="submission" date="2008-05" db="EMBL/GenBank/DDBJ databases">
        <title>Complete sequence of Shigella boydii serotype 18 strain BS512.</title>
        <authorList>
            <person name="Rasko D.A."/>
            <person name="Rosovitz M."/>
            <person name="Maurelli A.T."/>
            <person name="Myers G."/>
            <person name="Seshadri R."/>
            <person name="Cer R."/>
            <person name="Jiang L."/>
            <person name="Ravel J."/>
            <person name="Sebastian Y."/>
        </authorList>
    </citation>
    <scope>NUCLEOTIDE SEQUENCE [LARGE SCALE GENOMIC DNA]</scope>
    <source>
        <strain>CDC 3083-94 / BS512</strain>
    </source>
</reference>
<gene>
    <name evidence="1" type="primary">pyrC</name>
    <name type="ordered locus">SbBS512_E2265</name>
</gene>
<sequence length="348" mass="38788">MTAPSQVLKIRRPDDWHLHLRDGDMLKTVVPYTSEIYGRAIVMPNLAPPVTTVEAAVAYRQRILDAVPAGHNFTPLMTCYLTDSLDPNELERGFNEGVFTAAKLYPANATTNSSHGVTSIDAIMPVLERMEKIGMPLLVHGEVTHADIDIFDREAHFIESVMEPLRQRLTALKVVFEHITTKDAADYVHDGNERLAATITPQHLMFNRNHMLVGGVRPHLYCLPILKRNIHQQALRELVASGFNRVFLGTDSAPHARHRKESSCGCAGCFNAPTALGSYATVFEEMNALQHFEAFCSVNGPQFYGLPVNDTFIELVREEQQVAESIALTDDTLVPFLAGETVRWSVKQ</sequence>
<keyword id="KW-0378">Hydrolase</keyword>
<keyword id="KW-0479">Metal-binding</keyword>
<keyword id="KW-0665">Pyrimidine biosynthesis</keyword>
<keyword id="KW-1185">Reference proteome</keyword>
<keyword id="KW-0862">Zinc</keyword>